<accession>Q313W7</accession>
<organism>
    <name type="scientific">Oleidesulfovibrio alaskensis (strain ATCC BAA-1058 / DSM 17464 / G20)</name>
    <name type="common">Desulfovibrio alaskensis</name>
    <dbReference type="NCBI Taxonomy" id="207559"/>
    <lineage>
        <taxon>Bacteria</taxon>
        <taxon>Pseudomonadati</taxon>
        <taxon>Thermodesulfobacteriota</taxon>
        <taxon>Desulfovibrionia</taxon>
        <taxon>Desulfovibrionales</taxon>
        <taxon>Desulfovibrionaceae</taxon>
        <taxon>Oleidesulfovibrio</taxon>
    </lineage>
</organism>
<feature type="chain" id="PRO_0000344867" description="Ribonuclease Y">
    <location>
        <begin position="1"/>
        <end position="519"/>
    </location>
</feature>
<feature type="transmembrane region" description="Helical" evidence="1">
    <location>
        <begin position="3"/>
        <end position="23"/>
    </location>
</feature>
<feature type="domain" description="KH" evidence="1">
    <location>
        <begin position="209"/>
        <end position="272"/>
    </location>
</feature>
<feature type="domain" description="HD" evidence="2">
    <location>
        <begin position="335"/>
        <end position="428"/>
    </location>
</feature>
<reference key="1">
    <citation type="journal article" date="2011" name="J. Bacteriol.">
        <title>Complete genome sequence and updated annotation of Desulfovibrio alaskensis G20.</title>
        <authorList>
            <person name="Hauser L.J."/>
            <person name="Land M.L."/>
            <person name="Brown S.D."/>
            <person name="Larimer F."/>
            <person name="Keller K.L."/>
            <person name="Rapp-Giles B.J."/>
            <person name="Price M.N."/>
            <person name="Lin M."/>
            <person name="Bruce D.C."/>
            <person name="Detter J.C."/>
            <person name="Tapia R."/>
            <person name="Han C.S."/>
            <person name="Goodwin L.A."/>
            <person name="Cheng J.F."/>
            <person name="Pitluck S."/>
            <person name="Copeland A."/>
            <person name="Lucas S."/>
            <person name="Nolan M."/>
            <person name="Lapidus A.L."/>
            <person name="Palumbo A.V."/>
            <person name="Wall J.D."/>
        </authorList>
    </citation>
    <scope>NUCLEOTIDE SEQUENCE [LARGE SCALE GENOMIC DNA]</scope>
    <source>
        <strain>ATCC BAA-1058 / DSM 17464 / G20</strain>
    </source>
</reference>
<evidence type="ECO:0000255" key="1">
    <source>
        <dbReference type="HAMAP-Rule" id="MF_00335"/>
    </source>
</evidence>
<evidence type="ECO:0000255" key="2">
    <source>
        <dbReference type="PROSITE-ProRule" id="PRU01175"/>
    </source>
</evidence>
<sequence>MGLIEIVLLLVGMAVGAATGFILHKIVSAKRLQDARELADRIIEEARKEAQAHKKEVLIQGQDELFNQKRELEREFKEREHELKIRERRLQEQTERLEEKLEKLAQKEHDALSVEKELNRRERTLGLKEEELTQKIAEQDKKLQEISGLTSEEAKARIFSEVEARTRHEAGKMIRVIETEAKETASRSAQKILATAVQRYAGDFVNEQTVTAVSLPSEDMKGRIIGREGRNIRALEAATGVDLIIDDTPETVILSAYSPLRRQIAKMALERLISDGRIHPARIEDIVRKCEQELEVQLREVGEQATFDVGVHGIHPEIIKLLGQLKYRTSFSQNVLQHSMEVASLCGIMAAELGMDEKRAKRAGLLHDIGKAVDHDVEGPHAVIGADLAKKYGESKDIIHAIAAHHEDVPPKSALAVLVQAADSLSGARPGARKELLENYVKRLEDLEGIANGMEGVSKAYAIQAGREIRVLVNSDEVDDDTTYMLCKDISEKIEKNLTYPGQIRVTVIRERRAVGVAK</sequence>
<proteinExistence type="inferred from homology"/>
<dbReference type="EC" id="3.1.-.-" evidence="1"/>
<dbReference type="EMBL" id="CP000112">
    <property type="protein sequence ID" value="ABB37779.2"/>
    <property type="molecule type" value="Genomic_DNA"/>
</dbReference>
<dbReference type="RefSeq" id="WP_011367022.1">
    <property type="nucleotide sequence ID" value="NC_007519.1"/>
</dbReference>
<dbReference type="SMR" id="Q313W7"/>
<dbReference type="STRING" id="207559.Dde_0978"/>
<dbReference type="KEGG" id="dde:Dde_0978"/>
<dbReference type="eggNOG" id="COG1418">
    <property type="taxonomic scope" value="Bacteria"/>
</dbReference>
<dbReference type="HOGENOM" id="CLU_028328_1_0_7"/>
<dbReference type="Proteomes" id="UP000002710">
    <property type="component" value="Chromosome"/>
</dbReference>
<dbReference type="GO" id="GO:0005886">
    <property type="term" value="C:plasma membrane"/>
    <property type="evidence" value="ECO:0007669"/>
    <property type="project" value="UniProtKB-SubCell"/>
</dbReference>
<dbReference type="GO" id="GO:0003723">
    <property type="term" value="F:RNA binding"/>
    <property type="evidence" value="ECO:0007669"/>
    <property type="project" value="UniProtKB-UniRule"/>
</dbReference>
<dbReference type="GO" id="GO:0004521">
    <property type="term" value="F:RNA endonuclease activity"/>
    <property type="evidence" value="ECO:0007669"/>
    <property type="project" value="UniProtKB-UniRule"/>
</dbReference>
<dbReference type="GO" id="GO:0006402">
    <property type="term" value="P:mRNA catabolic process"/>
    <property type="evidence" value="ECO:0007669"/>
    <property type="project" value="UniProtKB-UniRule"/>
</dbReference>
<dbReference type="CDD" id="cd00077">
    <property type="entry name" value="HDc"/>
    <property type="match status" value="1"/>
</dbReference>
<dbReference type="CDD" id="cd22431">
    <property type="entry name" value="KH-I_RNaseY"/>
    <property type="match status" value="1"/>
</dbReference>
<dbReference type="FunFam" id="1.10.3210.10:FF:000022">
    <property type="entry name" value="Ribonuclease Y"/>
    <property type="match status" value="1"/>
</dbReference>
<dbReference type="Gene3D" id="1.10.3210.10">
    <property type="entry name" value="Hypothetical protein af1432"/>
    <property type="match status" value="1"/>
</dbReference>
<dbReference type="Gene3D" id="3.30.1370.10">
    <property type="entry name" value="K Homology domain, type 1"/>
    <property type="match status" value="1"/>
</dbReference>
<dbReference type="HAMAP" id="MF_00335">
    <property type="entry name" value="RNase_Y"/>
    <property type="match status" value="1"/>
</dbReference>
<dbReference type="InterPro" id="IPR003607">
    <property type="entry name" value="HD/PDEase_dom"/>
</dbReference>
<dbReference type="InterPro" id="IPR006674">
    <property type="entry name" value="HD_domain"/>
</dbReference>
<dbReference type="InterPro" id="IPR006675">
    <property type="entry name" value="HDIG_dom"/>
</dbReference>
<dbReference type="InterPro" id="IPR004087">
    <property type="entry name" value="KH_dom"/>
</dbReference>
<dbReference type="InterPro" id="IPR004088">
    <property type="entry name" value="KH_dom_type_1"/>
</dbReference>
<dbReference type="InterPro" id="IPR036612">
    <property type="entry name" value="KH_dom_type_1_sf"/>
</dbReference>
<dbReference type="InterPro" id="IPR017705">
    <property type="entry name" value="Ribonuclease_Y"/>
</dbReference>
<dbReference type="InterPro" id="IPR022711">
    <property type="entry name" value="RNase_Y_N"/>
</dbReference>
<dbReference type="NCBIfam" id="TIGR00277">
    <property type="entry name" value="HDIG"/>
    <property type="match status" value="1"/>
</dbReference>
<dbReference type="NCBIfam" id="TIGR03319">
    <property type="entry name" value="RNase_Y"/>
    <property type="match status" value="1"/>
</dbReference>
<dbReference type="PANTHER" id="PTHR12826">
    <property type="entry name" value="RIBONUCLEASE Y"/>
    <property type="match status" value="1"/>
</dbReference>
<dbReference type="PANTHER" id="PTHR12826:SF15">
    <property type="entry name" value="RIBONUCLEASE Y"/>
    <property type="match status" value="1"/>
</dbReference>
<dbReference type="Pfam" id="PF01966">
    <property type="entry name" value="HD"/>
    <property type="match status" value="1"/>
</dbReference>
<dbReference type="Pfam" id="PF00013">
    <property type="entry name" value="KH_1"/>
    <property type="match status" value="1"/>
</dbReference>
<dbReference type="Pfam" id="PF12072">
    <property type="entry name" value="RNase_Y_N"/>
    <property type="match status" value="1"/>
</dbReference>
<dbReference type="SMART" id="SM00471">
    <property type="entry name" value="HDc"/>
    <property type="match status" value="1"/>
</dbReference>
<dbReference type="SMART" id="SM00322">
    <property type="entry name" value="KH"/>
    <property type="match status" value="1"/>
</dbReference>
<dbReference type="SUPFAM" id="SSF54791">
    <property type="entry name" value="Eukaryotic type KH-domain (KH-domain type I)"/>
    <property type="match status" value="1"/>
</dbReference>
<dbReference type="SUPFAM" id="SSF109604">
    <property type="entry name" value="HD-domain/PDEase-like"/>
    <property type="match status" value="1"/>
</dbReference>
<dbReference type="PROSITE" id="PS51831">
    <property type="entry name" value="HD"/>
    <property type="match status" value="1"/>
</dbReference>
<dbReference type="PROSITE" id="PS50084">
    <property type="entry name" value="KH_TYPE_1"/>
    <property type="match status" value="1"/>
</dbReference>
<keyword id="KW-1003">Cell membrane</keyword>
<keyword id="KW-0255">Endonuclease</keyword>
<keyword id="KW-0378">Hydrolase</keyword>
<keyword id="KW-0472">Membrane</keyword>
<keyword id="KW-0540">Nuclease</keyword>
<keyword id="KW-1185">Reference proteome</keyword>
<keyword id="KW-0694">RNA-binding</keyword>
<keyword id="KW-0812">Transmembrane</keyword>
<keyword id="KW-1133">Transmembrane helix</keyword>
<protein>
    <recommendedName>
        <fullName evidence="1">Ribonuclease Y</fullName>
        <shortName evidence="1">RNase Y</shortName>
        <ecNumber evidence="1">3.1.-.-</ecNumber>
    </recommendedName>
</protein>
<name>RNY_OLEA2</name>
<comment type="function">
    <text evidence="1">Endoribonuclease that initiates mRNA decay.</text>
</comment>
<comment type="subcellular location">
    <subcellularLocation>
        <location evidence="1">Cell membrane</location>
        <topology evidence="1">Single-pass membrane protein</topology>
    </subcellularLocation>
</comment>
<comment type="similarity">
    <text evidence="1">Belongs to the RNase Y family.</text>
</comment>
<gene>
    <name evidence="1" type="primary">rny</name>
    <name type="ordered locus">Dde_0978</name>
</gene>